<dbReference type="GO" id="GO:0005576">
    <property type="term" value="C:extracellular region"/>
    <property type="evidence" value="ECO:0007669"/>
    <property type="project" value="UniProtKB-SubCell"/>
</dbReference>
<dbReference type="GO" id="GO:0006952">
    <property type="term" value="P:defense response"/>
    <property type="evidence" value="ECO:0007669"/>
    <property type="project" value="UniProtKB-KW"/>
</dbReference>
<evidence type="ECO:0000250" key="1">
    <source>
        <dbReference type="UniProtKB" id="C0HK89"/>
    </source>
</evidence>
<evidence type="ECO:0000269" key="2">
    <source>
    </source>
</evidence>
<evidence type="ECO:0000303" key="3">
    <source>
    </source>
</evidence>
<evidence type="ECO:0000305" key="4"/>
<evidence type="ECO:0000305" key="5">
    <source>
    </source>
</evidence>
<accession>C0HKM8</accession>
<protein>
    <recommendedName>
        <fullName evidence="3">Caerulein precursor fragment R4</fullName>
    </recommendedName>
    <alternativeName>
        <fullName evidence="3">CPF-R4</fullName>
    </alternativeName>
</protein>
<organism evidence="3">
    <name type="scientific">Xenopus ruwenzoriensis</name>
    <name type="common">Uganda clawed frog</name>
    <dbReference type="NCBI Taxonomy" id="105430"/>
    <lineage>
        <taxon>Eukaryota</taxon>
        <taxon>Metazoa</taxon>
        <taxon>Chordata</taxon>
        <taxon>Craniata</taxon>
        <taxon>Vertebrata</taxon>
        <taxon>Euteleostomi</taxon>
        <taxon>Amphibia</taxon>
        <taxon>Batrachia</taxon>
        <taxon>Anura</taxon>
        <taxon>Pipoidea</taxon>
        <taxon>Pipidae</taxon>
        <taxon>Xenopodinae</taxon>
        <taxon>Xenopus</taxon>
        <taxon>Xenopus</taxon>
    </lineage>
</organism>
<name>CPFR4_XENRU</name>
<reference evidence="4" key="1">
    <citation type="journal article" date="2016" name="Comp. Biochem. Physiol.">
        <title>Peptidomic analysis of the extensive array of host-defense peptides in skin secretions of the dodecaploid frog Xenopus ruwenzoriensis (Pipidae).</title>
        <authorList>
            <person name="Coquet L."/>
            <person name="Kolodziejek J."/>
            <person name="Jouenne T."/>
            <person name="Nowotny N."/>
            <person name="King J.D."/>
            <person name="Conlon J.M."/>
        </authorList>
    </citation>
    <scope>PROTEIN SEQUENCE</scope>
    <scope>SUBCELLULAR LOCATION</scope>
    <scope>MASS SPECTROMETRY</scope>
    <source>
        <tissue evidence="3">Skin secretion</tissue>
    </source>
</reference>
<feature type="peptide" id="PRO_0000440914" description="Caerulein precursor fragment R4" evidence="2">
    <location>
        <begin position="1"/>
        <end position="27"/>
    </location>
</feature>
<keyword id="KW-0878">Amphibian defense peptide</keyword>
<keyword id="KW-0929">Antimicrobial</keyword>
<keyword id="KW-0903">Direct protein sequencing</keyword>
<keyword id="KW-0964">Secreted</keyword>
<comment type="function">
    <text evidence="1">Antimicrobial peptide.</text>
</comment>
<comment type="subcellular location">
    <subcellularLocation>
        <location evidence="2">Secreted</location>
    </subcellularLocation>
</comment>
<comment type="tissue specificity">
    <text evidence="5">Expressed by the skin glands.</text>
</comment>
<comment type="mass spectrometry"/>
<comment type="similarity">
    <text evidence="4">Belongs to the gastrin/cholecystokinin family.</text>
</comment>
<sequence>GFGSFLGKALKAALKIGANALGGSPQQ</sequence>
<proteinExistence type="evidence at protein level"/>